<accession>B5R0R3</accession>
<keyword id="KW-0119">Carbohydrate metabolism</keyword>
<keyword id="KW-0210">Decarboxylase</keyword>
<keyword id="KW-0456">Lyase</keyword>
<keyword id="KW-0460">Magnesium</keyword>
<keyword id="KW-0479">Metal-binding</keyword>
<reference key="1">
    <citation type="journal article" date="2008" name="Genome Res.">
        <title>Comparative genome analysis of Salmonella enteritidis PT4 and Salmonella gallinarum 287/91 provides insights into evolutionary and host adaptation pathways.</title>
        <authorList>
            <person name="Thomson N.R."/>
            <person name="Clayton D.J."/>
            <person name="Windhorst D."/>
            <person name="Vernikos G."/>
            <person name="Davidson S."/>
            <person name="Churcher C."/>
            <person name="Quail M.A."/>
            <person name="Stevens M."/>
            <person name="Jones M.A."/>
            <person name="Watson M."/>
            <person name="Barron A."/>
            <person name="Layton A."/>
            <person name="Pickard D."/>
            <person name="Kingsley R.A."/>
            <person name="Bignell A."/>
            <person name="Clark L."/>
            <person name="Harris B."/>
            <person name="Ormond D."/>
            <person name="Abdellah Z."/>
            <person name="Brooks K."/>
            <person name="Cherevach I."/>
            <person name="Chillingworth T."/>
            <person name="Woodward J."/>
            <person name="Norberczak H."/>
            <person name="Lord A."/>
            <person name="Arrowsmith C."/>
            <person name="Jagels K."/>
            <person name="Moule S."/>
            <person name="Mungall K."/>
            <person name="Saunders M."/>
            <person name="Whitehead S."/>
            <person name="Chabalgoity J.A."/>
            <person name="Maskell D."/>
            <person name="Humphreys T."/>
            <person name="Roberts M."/>
            <person name="Barrow P.A."/>
            <person name="Dougan G."/>
            <person name="Parkhill J."/>
        </authorList>
    </citation>
    <scope>NUCLEOTIDE SEQUENCE [LARGE SCALE GENOMIC DNA]</scope>
    <source>
        <strain>P125109</strain>
    </source>
</reference>
<comment type="function">
    <text evidence="1">Catalyzes the decarboxylation of 3-keto-L-gulonate-6-P into L-xylulose-5-P. Is involved in the anaerobic L-ascorbate utilization.</text>
</comment>
<comment type="catalytic activity">
    <reaction evidence="1">
        <text>3-dehydro-L-gulonate 6-phosphate + H(+) = L-xylulose 5-phosphate + CO2</text>
        <dbReference type="Rhea" id="RHEA:14353"/>
        <dbReference type="ChEBI" id="CHEBI:15378"/>
        <dbReference type="ChEBI" id="CHEBI:16526"/>
        <dbReference type="ChEBI" id="CHEBI:57829"/>
        <dbReference type="ChEBI" id="CHEBI:58774"/>
        <dbReference type="EC" id="4.1.1.85"/>
    </reaction>
</comment>
<comment type="cofactor">
    <cofactor evidence="1">
        <name>Mg(2+)</name>
        <dbReference type="ChEBI" id="CHEBI:18420"/>
    </cofactor>
    <text evidence="1">Binds 1 Mg(2+) ion per subunit.</text>
</comment>
<comment type="pathway">
    <text evidence="1">Cofactor degradation; L-ascorbate degradation; D-xylulose 5-phosphate from L-ascorbate: step 2/4.</text>
</comment>
<comment type="subunit">
    <text evidence="1">Homodimer.</text>
</comment>
<comment type="induction">
    <text evidence="1">Induced by L-ascorbate. Repressed by UlaR.</text>
</comment>
<comment type="similarity">
    <text evidence="1">Belongs to the HPS/KGPDC family. KGPDC subfamily.</text>
</comment>
<organism>
    <name type="scientific">Salmonella enteritidis PT4 (strain P125109)</name>
    <dbReference type="NCBI Taxonomy" id="550537"/>
    <lineage>
        <taxon>Bacteria</taxon>
        <taxon>Pseudomonadati</taxon>
        <taxon>Pseudomonadota</taxon>
        <taxon>Gammaproteobacteria</taxon>
        <taxon>Enterobacterales</taxon>
        <taxon>Enterobacteriaceae</taxon>
        <taxon>Salmonella</taxon>
    </lineage>
</organism>
<protein>
    <recommendedName>
        <fullName evidence="1">3-keto-L-gulonate-6-phosphate decarboxylase UlaD</fullName>
        <ecNumber evidence="1">4.1.1.85</ecNumber>
    </recommendedName>
    <alternativeName>
        <fullName evidence="1">3-dehydro-L-gulonate-6-phosphate decarboxylase</fullName>
    </alternativeName>
    <alternativeName>
        <fullName evidence="1">KGPDC</fullName>
    </alternativeName>
    <alternativeName>
        <fullName evidence="1">L-ascorbate utilization protein D</fullName>
    </alternativeName>
</protein>
<dbReference type="EC" id="4.1.1.85" evidence="1"/>
<dbReference type="EMBL" id="AM933172">
    <property type="protein sequence ID" value="CAR35712.1"/>
    <property type="molecule type" value="Genomic_DNA"/>
</dbReference>
<dbReference type="RefSeq" id="WP_000056761.1">
    <property type="nucleotide sequence ID" value="NC_011294.1"/>
</dbReference>
<dbReference type="SMR" id="B5R0R3"/>
<dbReference type="KEGG" id="set:SEN4152"/>
<dbReference type="HOGENOM" id="CLU_081825_0_0_6"/>
<dbReference type="UniPathway" id="UPA00263">
    <property type="reaction ID" value="UER00378"/>
</dbReference>
<dbReference type="Proteomes" id="UP000000613">
    <property type="component" value="Chromosome"/>
</dbReference>
<dbReference type="GO" id="GO:0033982">
    <property type="term" value="F:3-dehydro-L-gulonate-6-phosphate decarboxylase activity"/>
    <property type="evidence" value="ECO:0007669"/>
    <property type="project" value="UniProtKB-EC"/>
</dbReference>
<dbReference type="GO" id="GO:0000287">
    <property type="term" value="F:magnesium ion binding"/>
    <property type="evidence" value="ECO:0007669"/>
    <property type="project" value="UniProtKB-UniRule"/>
</dbReference>
<dbReference type="GO" id="GO:0004590">
    <property type="term" value="F:orotidine-5'-phosphate decarboxylase activity"/>
    <property type="evidence" value="ECO:0007669"/>
    <property type="project" value="InterPro"/>
</dbReference>
<dbReference type="GO" id="GO:0006207">
    <property type="term" value="P:'de novo' pyrimidine nucleobase biosynthetic process"/>
    <property type="evidence" value="ECO:0007669"/>
    <property type="project" value="InterPro"/>
</dbReference>
<dbReference type="GO" id="GO:0019854">
    <property type="term" value="P:L-ascorbic acid catabolic process"/>
    <property type="evidence" value="ECO:0007669"/>
    <property type="project" value="UniProtKB-UniRule"/>
</dbReference>
<dbReference type="CDD" id="cd04726">
    <property type="entry name" value="KGPDC_HPS"/>
    <property type="match status" value="1"/>
</dbReference>
<dbReference type="FunFam" id="3.20.20.70:FF:000022">
    <property type="entry name" value="3-keto-L-gulonate-6-phosphate decarboxylase UlaD"/>
    <property type="match status" value="1"/>
</dbReference>
<dbReference type="Gene3D" id="3.20.20.70">
    <property type="entry name" value="Aldolase class I"/>
    <property type="match status" value="1"/>
</dbReference>
<dbReference type="HAMAP" id="MF_01267">
    <property type="entry name" value="UlaD"/>
    <property type="match status" value="1"/>
</dbReference>
<dbReference type="InterPro" id="IPR023942">
    <property type="entry name" value="3-keto-L-gulonate6Pdecase_UlaD"/>
</dbReference>
<dbReference type="InterPro" id="IPR013785">
    <property type="entry name" value="Aldolase_TIM"/>
</dbReference>
<dbReference type="InterPro" id="IPR041710">
    <property type="entry name" value="HPS/KGPDC"/>
</dbReference>
<dbReference type="InterPro" id="IPR001754">
    <property type="entry name" value="OMPdeCOase_dom"/>
</dbReference>
<dbReference type="InterPro" id="IPR011060">
    <property type="entry name" value="RibuloseP-bd_barrel"/>
</dbReference>
<dbReference type="NCBIfam" id="NF009832">
    <property type="entry name" value="PRK13306.1"/>
    <property type="match status" value="1"/>
</dbReference>
<dbReference type="PANTHER" id="PTHR35039">
    <property type="entry name" value="3-KETO-L-GULONATE-6-PHOSPHATE DECARBOXYLASE SGBH-RELATED"/>
    <property type="match status" value="1"/>
</dbReference>
<dbReference type="PANTHER" id="PTHR35039:SF3">
    <property type="entry name" value="3-KETO-L-GULONATE-6-PHOSPHATE DECARBOXYLASE SGBH-RELATED"/>
    <property type="match status" value="1"/>
</dbReference>
<dbReference type="Pfam" id="PF00215">
    <property type="entry name" value="OMPdecase"/>
    <property type="match status" value="1"/>
</dbReference>
<dbReference type="SMART" id="SM00934">
    <property type="entry name" value="OMPdecase"/>
    <property type="match status" value="1"/>
</dbReference>
<dbReference type="SUPFAM" id="SSF51366">
    <property type="entry name" value="Ribulose-phoshate binding barrel"/>
    <property type="match status" value="1"/>
</dbReference>
<proteinExistence type="inferred from homology"/>
<feature type="chain" id="PRO_1000140120" description="3-keto-L-gulonate-6-phosphate decarboxylase UlaD">
    <location>
        <begin position="1"/>
        <end position="216"/>
    </location>
</feature>
<feature type="binding site" evidence="1">
    <location>
        <position position="11"/>
    </location>
    <ligand>
        <name>substrate</name>
    </ligand>
</feature>
<feature type="binding site" evidence="1">
    <location>
        <position position="33"/>
    </location>
    <ligand>
        <name>Mg(2+)</name>
        <dbReference type="ChEBI" id="CHEBI:18420"/>
    </ligand>
</feature>
<feature type="binding site" evidence="1">
    <location>
        <position position="62"/>
    </location>
    <ligand>
        <name>Mg(2+)</name>
        <dbReference type="ChEBI" id="CHEBI:18420"/>
    </ligand>
</feature>
<feature type="binding site" evidence="1">
    <location>
        <position position="192"/>
    </location>
    <ligand>
        <name>substrate</name>
    </ligand>
</feature>
<feature type="site" description="Transition state stabilizer" evidence="1">
    <location>
        <position position="64"/>
    </location>
</feature>
<feature type="site" description="Transition state stabilizer" evidence="1">
    <location>
        <position position="67"/>
    </location>
</feature>
<name>ULAD_SALEP</name>
<gene>
    <name evidence="1" type="primary">ulaD</name>
    <name type="ordered locus">SEN4152</name>
</gene>
<sequence>MSLPMLQVALDNQTMDSAYETTRLIAEEVDIIEVGTILCVGEGVRAVRDLKALYPHKIVLADAKIADAGKILSRMCFEANADWVTVICCADINTAKGALDVAKEFNGDVQIELTGYWTWEQAQQWRDAGIQQVVYHRSRDAQAAGVAWGEADITAIKRLSDMGFKVTVTGGLALEDLPLFKGIPIHVFIAGRSIRDAESPVEAARQFKRSIAQLWG</sequence>
<evidence type="ECO:0000255" key="1">
    <source>
        <dbReference type="HAMAP-Rule" id="MF_01267"/>
    </source>
</evidence>